<protein>
    <recommendedName>
        <fullName>Occlusion-derived virus envelope protein E27</fullName>
        <shortName>ODV-E27</shortName>
    </recommendedName>
</protein>
<organism>
    <name type="scientific">Orgyia pseudotsugata multicapsid polyhedrosis virus</name>
    <name type="common">OpMNPV</name>
    <dbReference type="NCBI Taxonomy" id="262177"/>
    <lineage>
        <taxon>Viruses</taxon>
        <taxon>Viruses incertae sedis</taxon>
        <taxon>Naldaviricetes</taxon>
        <taxon>Lefavirales</taxon>
        <taxon>Baculoviridae</taxon>
        <taxon>Alphabaculovirus</taxon>
        <taxon>Alphabaculovirus orpseudotsugatae</taxon>
    </lineage>
</organism>
<gene>
    <name type="ORF">ORF141</name>
</gene>
<proteinExistence type="inferred from homology"/>
<accession>O10372</accession>
<dbReference type="EMBL" id="U75930">
    <property type="protein sequence ID" value="AAC59140.1"/>
    <property type="molecule type" value="Genomic_DNA"/>
</dbReference>
<dbReference type="RefSeq" id="NP_046297.1">
    <property type="nucleotide sequence ID" value="NC_001875.2"/>
</dbReference>
<dbReference type="SMR" id="O10372"/>
<dbReference type="KEGG" id="vg:912081"/>
<dbReference type="OrthoDB" id="10588at10239"/>
<dbReference type="Proteomes" id="UP000009248">
    <property type="component" value="Genome"/>
</dbReference>
<dbReference type="GO" id="GO:0016020">
    <property type="term" value="C:membrane"/>
    <property type="evidence" value="ECO:0007669"/>
    <property type="project" value="UniProtKB-KW"/>
</dbReference>
<dbReference type="GO" id="GO:0019031">
    <property type="term" value="C:viral envelope"/>
    <property type="evidence" value="ECO:0007669"/>
    <property type="project" value="UniProtKB-KW"/>
</dbReference>
<dbReference type="GO" id="GO:0055036">
    <property type="term" value="C:virion membrane"/>
    <property type="evidence" value="ECO:0007669"/>
    <property type="project" value="UniProtKB-SubCell"/>
</dbReference>
<dbReference type="GO" id="GO:0044071">
    <property type="term" value="P:symbiont-mediated perturbation of host cell cycle progression"/>
    <property type="evidence" value="ECO:0007669"/>
    <property type="project" value="UniProtKB-KW"/>
</dbReference>
<dbReference type="InterPro" id="IPR007978">
    <property type="entry name" value="Baculo_ODV-E27"/>
</dbReference>
<dbReference type="Pfam" id="PF05314">
    <property type="entry name" value="Baculo_ODV-E27"/>
    <property type="match status" value="1"/>
</dbReference>
<reference key="1">
    <citation type="journal article" date="1997" name="Virology">
        <title>The sequence of the Orgyia pseudotsugata multinucleocapsid nuclear polyhedrosis virus genome.</title>
        <authorList>
            <person name="Ahrens C.H."/>
            <person name="Russell R.R."/>
            <person name="Funk C.J."/>
            <person name="Evans J."/>
            <person name="Harwood S."/>
            <person name="Rohrmann G.F."/>
        </authorList>
    </citation>
    <scope>NUCLEOTIDE SEQUENCE [LARGE SCALE GENOMIC DNA]</scope>
</reference>
<comment type="function">
    <text evidence="1">Acts as a cyclin-like protein and plays a role in the modulation of host cell cycle. May promote G2/S arrest by interacting with host mus209/PCNA, cdc2 and cdk6. The cell cycle arrest is characterized by an intact nuclear envelope, concomitant with sustained activity of host cdc2. However, viral DNA replication still occurs in the arrested cells (By similarity).</text>
</comment>
<comment type="subunit">
    <text evidence="1">Interacts with host mus209/PCNA, cdc2 and cdk6.</text>
</comment>
<comment type="subcellular location">
    <subcellularLocation>
        <location evidence="1">Virion membrane</location>
    </subcellularLocation>
</comment>
<comment type="similarity">
    <text evidence="2">Belongs to the baculoviridae E27 family.</text>
</comment>
<organismHost>
    <name type="scientific">Orgyia pseudotsugata</name>
    <name type="common">Douglas-fir tussock moth</name>
    <dbReference type="NCBI Taxonomy" id="33414"/>
</organismHost>
<name>OE27_NPVOP</name>
<feature type="chain" id="PRO_0000132922" description="Occlusion-derived virus envelope protein E27">
    <location>
        <begin position="1"/>
        <end position="297"/>
    </location>
</feature>
<evidence type="ECO:0000250" key="1"/>
<evidence type="ECO:0000305" key="2"/>
<keyword id="KW-0945">Host-virus interaction</keyword>
<keyword id="KW-0472">Membrane</keyword>
<keyword id="KW-1120">Modulation of host cell cycle by viral cyclin-like protein</keyword>
<keyword id="KW-1121">Modulation of host cell cycle by virus</keyword>
<keyword id="KW-1185">Reference proteome</keyword>
<keyword id="KW-0261">Viral envelope protein</keyword>
<keyword id="KW-0946">Virion</keyword>
<sequence length="297" mass="34330">MKRVRCNKVRTVTEVKPNNAKIRKTYDLNEFDLKNLSSLESFENTKVKLALSKYMAMINTLEMTQPLLEVFRNRADTRQIVAVVQATMGFVHNRFNPLVTHFTNKMEFVTTETAETIIPGEPILFTENDGALLCAIDRPSIVKMLSREFDLSVAAEPQTSNREVLVAKTLVSNKRKRRSSNDEGYEFIKRPRTFSEYNQCMDALSDFNVTEIETTQYLLLLLIVEHAYLHYYIFKNYGALEYSKSLMDHSLFVNKLRSSTNAKMHNLLLSKFRFTVEESDKTSSGTTSKFTVYNFNK</sequence>